<protein>
    <recommendedName>
        <fullName>Aspartate-semialdehyde dehydrogenase</fullName>
        <shortName>ASA dehydrogenase</shortName>
        <shortName>ASADH</shortName>
        <ecNumber>1.2.1.11</ecNumber>
    </recommendedName>
    <alternativeName>
        <fullName>Aspartate-beta-semialdehyde dehydrogenase</fullName>
    </alternativeName>
</protein>
<sequence>MKNVGFIGWRGMVGSVLMQRMVEERDFDAIRPVFFSTSQFGQAAPTFGDTSTGTLQDAFDLDALKALDIIVTCQGGDYTNEIYPKLRESGWQGYWIDAASTLRMKDDAIIILDPVNQDVITDGLNNGVKTFVGGNCTVSLMLMSLGGLFAHNLVDWVSVATYQAASGGGARHMRELLTQMGQLYGHVADELATPSSAILDIERKVTALTRSGELPVDNFGVPLAGSLIPWIDKQLDNGQSREEWKGQAETNKILNTASVIPVDGLCVRVGALRCHSQAFTIKLKKEVSIPTVEELLAAHNPWAKVVPNDRDITMRELTPAAVTGTLTTPVGRLRKLNMGPEFLSAFTVGDQLLWGAAEPLRRMLRQLA</sequence>
<comment type="function">
    <text evidence="1">Catalyzes the NADPH-dependent formation of L-aspartate-semialdehyde (L-ASA) by the reductive dephosphorylation of L-aspartyl-4-phosphate.</text>
</comment>
<comment type="catalytic activity">
    <reaction>
        <text>L-aspartate 4-semialdehyde + phosphate + NADP(+) = 4-phospho-L-aspartate + NADPH + H(+)</text>
        <dbReference type="Rhea" id="RHEA:24284"/>
        <dbReference type="ChEBI" id="CHEBI:15378"/>
        <dbReference type="ChEBI" id="CHEBI:43474"/>
        <dbReference type="ChEBI" id="CHEBI:57535"/>
        <dbReference type="ChEBI" id="CHEBI:57783"/>
        <dbReference type="ChEBI" id="CHEBI:58349"/>
        <dbReference type="ChEBI" id="CHEBI:537519"/>
        <dbReference type="EC" id="1.2.1.11"/>
    </reaction>
</comment>
<comment type="pathway">
    <text>Amino-acid biosynthesis; L-lysine biosynthesis via DAP pathway; (S)-tetrahydrodipicolinate from L-aspartate: step 2/4.</text>
</comment>
<comment type="pathway">
    <text>Amino-acid biosynthesis; L-methionine biosynthesis via de novo pathway; L-homoserine from L-aspartate: step 2/3.</text>
</comment>
<comment type="pathway">
    <text>Amino-acid biosynthesis; L-threonine biosynthesis; L-threonine from L-aspartate: step 2/5.</text>
</comment>
<comment type="subunit">
    <text evidence="1">Homodimer.</text>
</comment>
<comment type="disruption phenotype">
    <text evidence="2">Cells lacking this gene have an obligate requirement for diaminopimelic acid (DAP) and undergo lysis in environments deprived of DAP.</text>
</comment>
<comment type="biotechnology">
    <text evidence="2">Vaccine strains for Salmonella typhimurium were successfully produced using strains with mutations in the asd gene.</text>
</comment>
<comment type="similarity">
    <text evidence="3">Belongs to the aspartate-semialdehyde dehydrogenase family.</text>
</comment>
<comment type="sequence caution" evidence="3">
    <conflict type="erroneous initiation">
        <sequence resource="EMBL-CDS" id="AAB69392"/>
    </conflict>
    <text>Extended N-terminus.</text>
</comment>
<feature type="chain" id="PRO_0000141373" description="Aspartate-semialdehyde dehydrogenase">
    <location>
        <begin position="1"/>
        <end position="368"/>
    </location>
</feature>
<feature type="active site" description="Acyl-thioester intermediate" evidence="1">
    <location>
        <position position="136"/>
    </location>
</feature>
<feature type="active site" description="Proton acceptor" evidence="1">
    <location>
        <position position="275"/>
    </location>
</feature>
<feature type="binding site" evidence="1">
    <location>
        <begin position="10"/>
        <end position="13"/>
    </location>
    <ligand>
        <name>NADP(+)</name>
        <dbReference type="ChEBI" id="CHEBI:58349"/>
    </ligand>
</feature>
<feature type="binding site" evidence="1">
    <location>
        <begin position="37"/>
        <end position="38"/>
    </location>
    <ligand>
        <name>NADP(+)</name>
        <dbReference type="ChEBI" id="CHEBI:58349"/>
    </ligand>
</feature>
<feature type="binding site" evidence="1">
    <location>
        <position position="74"/>
    </location>
    <ligand>
        <name>NADP(+)</name>
        <dbReference type="ChEBI" id="CHEBI:58349"/>
    </ligand>
</feature>
<feature type="binding site" evidence="1">
    <location>
        <position position="103"/>
    </location>
    <ligand>
        <name>phosphate</name>
        <dbReference type="ChEBI" id="CHEBI:43474"/>
    </ligand>
</feature>
<feature type="binding site" evidence="1">
    <location>
        <position position="163"/>
    </location>
    <ligand>
        <name>substrate</name>
    </ligand>
</feature>
<feature type="binding site" evidence="1">
    <location>
        <begin position="166"/>
        <end position="167"/>
    </location>
    <ligand>
        <name>NADP(+)</name>
        <dbReference type="ChEBI" id="CHEBI:58349"/>
    </ligand>
</feature>
<feature type="binding site" evidence="1">
    <location>
        <position position="194"/>
    </location>
    <ligand>
        <name>NADP(+)</name>
        <dbReference type="ChEBI" id="CHEBI:58349"/>
    </ligand>
</feature>
<feature type="binding site" evidence="1">
    <location>
        <position position="242"/>
    </location>
    <ligand>
        <name>substrate</name>
    </ligand>
</feature>
<feature type="binding site" evidence="1">
    <location>
        <position position="245"/>
    </location>
    <ligand>
        <name>phosphate</name>
        <dbReference type="ChEBI" id="CHEBI:43474"/>
    </ligand>
</feature>
<feature type="binding site" evidence="1">
    <location>
        <position position="268"/>
    </location>
    <ligand>
        <name>substrate</name>
    </ligand>
</feature>
<feature type="binding site" evidence="1">
    <location>
        <position position="351"/>
    </location>
    <ligand>
        <name>NADP(+)</name>
        <dbReference type="ChEBI" id="CHEBI:58349"/>
    </ligand>
</feature>
<feature type="modified residue" description="S-cysteinyl cysteine; in inhibited form" evidence="1">
    <location>
        <position position="136"/>
    </location>
</feature>
<evidence type="ECO:0000250" key="1"/>
<evidence type="ECO:0000269" key="2">
    <source>
    </source>
</evidence>
<evidence type="ECO:0000305" key="3"/>
<name>DHAS_SALTY</name>
<reference key="1">
    <citation type="submission" date="1997-07" db="EMBL/GenBank/DDBJ databases">
        <authorList>
            <person name="Galan J."/>
            <person name="Antoine G."/>
            <person name="Curtiss R. III"/>
        </authorList>
    </citation>
    <scope>NUCLEOTIDE SEQUENCE [GENOMIC DNA]</scope>
</reference>
<reference key="2">
    <citation type="journal article" date="2001" name="Nature">
        <title>Complete genome sequence of Salmonella enterica serovar Typhimurium LT2.</title>
        <authorList>
            <person name="McClelland M."/>
            <person name="Sanderson K.E."/>
            <person name="Spieth J."/>
            <person name="Clifton S.W."/>
            <person name="Latreille P."/>
            <person name="Courtney L."/>
            <person name="Porwollik S."/>
            <person name="Ali J."/>
            <person name="Dante M."/>
            <person name="Du F."/>
            <person name="Hou S."/>
            <person name="Layman D."/>
            <person name="Leonard S."/>
            <person name="Nguyen C."/>
            <person name="Scott K."/>
            <person name="Holmes A."/>
            <person name="Grewal N."/>
            <person name="Mulvaney E."/>
            <person name="Ryan E."/>
            <person name="Sun H."/>
            <person name="Florea L."/>
            <person name="Miller W."/>
            <person name="Stoneking T."/>
            <person name="Nhan M."/>
            <person name="Waterston R."/>
            <person name="Wilson R.K."/>
        </authorList>
    </citation>
    <scope>NUCLEOTIDE SEQUENCE [LARGE SCALE GENOMIC DNA]</scope>
    <source>
        <strain>LT2 / SGSC1412 / ATCC 700720</strain>
    </source>
</reference>
<reference key="3">
    <citation type="journal article" date="1990" name="Gene">
        <title>Cloning and characterization of the asd gene of Salmonella typhimurium: use in stable maintenance of recombinant plasmids in Salmonella vaccine strains.</title>
        <authorList>
            <person name="Galan J.E."/>
            <person name="Nakayama K."/>
            <person name="Curtiss R. III"/>
        </authorList>
    </citation>
    <scope>DISRUPTION PHENOTYPE</scope>
    <scope>BIOTECHNOLOGY</scope>
</reference>
<dbReference type="EC" id="1.2.1.11"/>
<dbReference type="EMBL" id="AF015781">
    <property type="protein sequence ID" value="AAB69392.1"/>
    <property type="status" value="ALT_INIT"/>
    <property type="molecule type" value="Genomic_DNA"/>
</dbReference>
<dbReference type="EMBL" id="AE006468">
    <property type="protein sequence ID" value="AAL22399.1"/>
    <property type="molecule type" value="Genomic_DNA"/>
</dbReference>
<dbReference type="RefSeq" id="NP_462440.1">
    <property type="nucleotide sequence ID" value="NC_003197.2"/>
</dbReference>
<dbReference type="RefSeq" id="WP_000799940.1">
    <property type="nucleotide sequence ID" value="NC_003197.2"/>
</dbReference>
<dbReference type="SMR" id="P0A1F8"/>
<dbReference type="STRING" id="99287.STM3539"/>
<dbReference type="PaxDb" id="99287-STM3539"/>
<dbReference type="GeneID" id="1255062"/>
<dbReference type="KEGG" id="stm:STM3539"/>
<dbReference type="PATRIC" id="fig|99287.12.peg.3741"/>
<dbReference type="HOGENOM" id="CLU_066397_0_0_6"/>
<dbReference type="OMA" id="FVCGDNL"/>
<dbReference type="PhylomeDB" id="P0A1F8"/>
<dbReference type="BioCyc" id="SENT99287:STM3539-MONOMER"/>
<dbReference type="UniPathway" id="UPA00034">
    <property type="reaction ID" value="UER00016"/>
</dbReference>
<dbReference type="UniPathway" id="UPA00050">
    <property type="reaction ID" value="UER00463"/>
</dbReference>
<dbReference type="UniPathway" id="UPA00051">
    <property type="reaction ID" value="UER00464"/>
</dbReference>
<dbReference type="Proteomes" id="UP000001014">
    <property type="component" value="Chromosome"/>
</dbReference>
<dbReference type="GO" id="GO:0004073">
    <property type="term" value="F:aspartate-semialdehyde dehydrogenase activity"/>
    <property type="evidence" value="ECO:0007669"/>
    <property type="project" value="UniProtKB-UniRule"/>
</dbReference>
<dbReference type="GO" id="GO:0051287">
    <property type="term" value="F:NAD binding"/>
    <property type="evidence" value="ECO:0007669"/>
    <property type="project" value="InterPro"/>
</dbReference>
<dbReference type="GO" id="GO:0050661">
    <property type="term" value="F:NADP binding"/>
    <property type="evidence" value="ECO:0007669"/>
    <property type="project" value="UniProtKB-UniRule"/>
</dbReference>
<dbReference type="GO" id="GO:0046983">
    <property type="term" value="F:protein dimerization activity"/>
    <property type="evidence" value="ECO:0007669"/>
    <property type="project" value="InterPro"/>
</dbReference>
<dbReference type="GO" id="GO:0071266">
    <property type="term" value="P:'de novo' L-methionine biosynthetic process"/>
    <property type="evidence" value="ECO:0007669"/>
    <property type="project" value="UniProtKB-UniRule"/>
</dbReference>
<dbReference type="GO" id="GO:0019877">
    <property type="term" value="P:diaminopimelate biosynthetic process"/>
    <property type="evidence" value="ECO:0007669"/>
    <property type="project" value="UniProtKB-UniRule"/>
</dbReference>
<dbReference type="GO" id="GO:0009097">
    <property type="term" value="P:isoleucine biosynthetic process"/>
    <property type="evidence" value="ECO:0007669"/>
    <property type="project" value="InterPro"/>
</dbReference>
<dbReference type="GO" id="GO:0009089">
    <property type="term" value="P:lysine biosynthetic process via diaminopimelate"/>
    <property type="evidence" value="ECO:0007669"/>
    <property type="project" value="UniProtKB-UniRule"/>
</dbReference>
<dbReference type="GO" id="GO:0009088">
    <property type="term" value="P:threonine biosynthetic process"/>
    <property type="evidence" value="ECO:0007669"/>
    <property type="project" value="UniProtKB-UniRule"/>
</dbReference>
<dbReference type="CDD" id="cd23938">
    <property type="entry name" value="ASADH_C_bac_like"/>
    <property type="match status" value="1"/>
</dbReference>
<dbReference type="CDD" id="cd02314">
    <property type="entry name" value="VcASADH1_like_N"/>
    <property type="match status" value="1"/>
</dbReference>
<dbReference type="FunFam" id="3.30.360.10:FF:000012">
    <property type="entry name" value="Aspartate-semialdehyde dehydrogenase"/>
    <property type="match status" value="1"/>
</dbReference>
<dbReference type="FunFam" id="3.40.50.720:FF:000152">
    <property type="entry name" value="Aspartate-semialdehyde dehydrogenase"/>
    <property type="match status" value="1"/>
</dbReference>
<dbReference type="Gene3D" id="3.30.360.10">
    <property type="entry name" value="Dihydrodipicolinate Reductase, domain 2"/>
    <property type="match status" value="1"/>
</dbReference>
<dbReference type="Gene3D" id="3.40.50.720">
    <property type="entry name" value="NAD(P)-binding Rossmann-like Domain"/>
    <property type="match status" value="1"/>
</dbReference>
<dbReference type="HAMAP" id="MF_02121">
    <property type="entry name" value="ASADH"/>
    <property type="match status" value="1"/>
</dbReference>
<dbReference type="InterPro" id="IPR000319">
    <property type="entry name" value="Asp-semialdehyde_DH_CS"/>
</dbReference>
<dbReference type="InterPro" id="IPR011534">
    <property type="entry name" value="Asp_ADH_gamma-type"/>
</dbReference>
<dbReference type="InterPro" id="IPR012080">
    <property type="entry name" value="Asp_semialdehyde_DH"/>
</dbReference>
<dbReference type="InterPro" id="IPR036291">
    <property type="entry name" value="NAD(P)-bd_dom_sf"/>
</dbReference>
<dbReference type="InterPro" id="IPR000534">
    <property type="entry name" value="Semialdehyde_DH_NAD-bd"/>
</dbReference>
<dbReference type="InterPro" id="IPR012280">
    <property type="entry name" value="Semialdhyde_DH_dimer_dom"/>
</dbReference>
<dbReference type="NCBIfam" id="TIGR01745">
    <property type="entry name" value="asd_gamma"/>
    <property type="match status" value="1"/>
</dbReference>
<dbReference type="NCBIfam" id="NF005144">
    <property type="entry name" value="PRK06598.1"/>
    <property type="match status" value="1"/>
</dbReference>
<dbReference type="PANTHER" id="PTHR46278:SF4">
    <property type="entry name" value="ASPARTATE-SEMIALDEHYDE DEHYDROGENASE"/>
    <property type="match status" value="1"/>
</dbReference>
<dbReference type="PANTHER" id="PTHR46278">
    <property type="entry name" value="DEHYDROGENASE, PUTATIVE-RELATED"/>
    <property type="match status" value="1"/>
</dbReference>
<dbReference type="Pfam" id="PF01118">
    <property type="entry name" value="Semialdhyde_dh"/>
    <property type="match status" value="1"/>
</dbReference>
<dbReference type="Pfam" id="PF02774">
    <property type="entry name" value="Semialdhyde_dhC"/>
    <property type="match status" value="1"/>
</dbReference>
<dbReference type="PIRSF" id="PIRSF000148">
    <property type="entry name" value="ASA_dh"/>
    <property type="match status" value="1"/>
</dbReference>
<dbReference type="SMART" id="SM00859">
    <property type="entry name" value="Semialdhyde_dh"/>
    <property type="match status" value="1"/>
</dbReference>
<dbReference type="SUPFAM" id="SSF55347">
    <property type="entry name" value="Glyceraldehyde-3-phosphate dehydrogenase-like, C-terminal domain"/>
    <property type="match status" value="1"/>
</dbReference>
<dbReference type="SUPFAM" id="SSF51735">
    <property type="entry name" value="NAD(P)-binding Rossmann-fold domains"/>
    <property type="match status" value="1"/>
</dbReference>
<dbReference type="PROSITE" id="PS01103">
    <property type="entry name" value="ASD"/>
    <property type="match status" value="1"/>
</dbReference>
<accession>P0A1F8</accession>
<accession>O30706</accession>
<proteinExistence type="evidence at protein level"/>
<gene>
    <name type="primary">asd</name>
    <name type="ordered locus">STM3539</name>
</gene>
<organism>
    <name type="scientific">Salmonella typhimurium (strain LT2 / SGSC1412 / ATCC 700720)</name>
    <dbReference type="NCBI Taxonomy" id="99287"/>
    <lineage>
        <taxon>Bacteria</taxon>
        <taxon>Pseudomonadati</taxon>
        <taxon>Pseudomonadota</taxon>
        <taxon>Gammaproteobacteria</taxon>
        <taxon>Enterobacterales</taxon>
        <taxon>Enterobacteriaceae</taxon>
        <taxon>Salmonella</taxon>
    </lineage>
</organism>
<keyword id="KW-0028">Amino-acid biosynthesis</keyword>
<keyword id="KW-0220">Diaminopimelate biosynthesis</keyword>
<keyword id="KW-0457">Lysine biosynthesis</keyword>
<keyword id="KW-0486">Methionine biosynthesis</keyword>
<keyword id="KW-0521">NADP</keyword>
<keyword id="KW-0560">Oxidoreductase</keyword>
<keyword id="KW-1185">Reference proteome</keyword>
<keyword id="KW-0791">Threonine biosynthesis</keyword>